<dbReference type="EC" id="2.1.1.228" evidence="1"/>
<dbReference type="EMBL" id="AM884176">
    <property type="protein sequence ID" value="CAP03721.1"/>
    <property type="molecule type" value="Genomic_DNA"/>
</dbReference>
<dbReference type="RefSeq" id="WP_009873504.1">
    <property type="nucleotide sequence ID" value="NC_010287.1"/>
</dbReference>
<dbReference type="RefSeq" id="YP_001654366.1">
    <property type="nucleotide sequence ID" value="NC_010287.1"/>
</dbReference>
<dbReference type="SMR" id="B0B9D4"/>
<dbReference type="KEGG" id="ctb:CTL0282"/>
<dbReference type="PATRIC" id="fig|471472.4.peg.306"/>
<dbReference type="HOGENOM" id="CLU_047363_0_2_0"/>
<dbReference type="Proteomes" id="UP001154402">
    <property type="component" value="Chromosome"/>
</dbReference>
<dbReference type="GO" id="GO:0005829">
    <property type="term" value="C:cytosol"/>
    <property type="evidence" value="ECO:0007669"/>
    <property type="project" value="TreeGrafter"/>
</dbReference>
<dbReference type="GO" id="GO:0052906">
    <property type="term" value="F:tRNA (guanine(37)-N1)-methyltransferase activity"/>
    <property type="evidence" value="ECO:0007669"/>
    <property type="project" value="UniProtKB-UniRule"/>
</dbReference>
<dbReference type="GO" id="GO:0002939">
    <property type="term" value="P:tRNA N1-guanine methylation"/>
    <property type="evidence" value="ECO:0007669"/>
    <property type="project" value="TreeGrafter"/>
</dbReference>
<dbReference type="CDD" id="cd18080">
    <property type="entry name" value="TrmD-like"/>
    <property type="match status" value="1"/>
</dbReference>
<dbReference type="CDD" id="cd06587">
    <property type="entry name" value="VOC"/>
    <property type="match status" value="1"/>
</dbReference>
<dbReference type="FunFam" id="1.10.1270.20:FF:000004">
    <property type="entry name" value="tRNA (guanine-N(1)-)-methyltransferase"/>
    <property type="match status" value="1"/>
</dbReference>
<dbReference type="FunFam" id="3.40.1280.10:FF:000001">
    <property type="entry name" value="tRNA (guanine-N(1)-)-methyltransferase"/>
    <property type="match status" value="1"/>
</dbReference>
<dbReference type="Gene3D" id="3.40.1280.10">
    <property type="match status" value="1"/>
</dbReference>
<dbReference type="Gene3D" id="3.10.180.10">
    <property type="entry name" value="2,3-Dihydroxybiphenyl 1,2-Dioxygenase, domain 1"/>
    <property type="match status" value="1"/>
</dbReference>
<dbReference type="Gene3D" id="1.10.1270.20">
    <property type="entry name" value="tRNA(m1g37)methyltransferase, domain 2"/>
    <property type="match status" value="1"/>
</dbReference>
<dbReference type="HAMAP" id="MF_00605">
    <property type="entry name" value="TrmD"/>
    <property type="match status" value="1"/>
</dbReference>
<dbReference type="InterPro" id="IPR029028">
    <property type="entry name" value="Alpha/beta_knot_MTases"/>
</dbReference>
<dbReference type="InterPro" id="IPR029068">
    <property type="entry name" value="Glyas_Bleomycin-R_OHBP_Dase"/>
</dbReference>
<dbReference type="InterPro" id="IPR023148">
    <property type="entry name" value="tRNA_m1G_MeTrfase_C_sf"/>
</dbReference>
<dbReference type="InterPro" id="IPR002649">
    <property type="entry name" value="tRNA_m1G_MeTrfase_TrmD"/>
</dbReference>
<dbReference type="InterPro" id="IPR029026">
    <property type="entry name" value="tRNA_m1G_MTases_N"/>
</dbReference>
<dbReference type="InterPro" id="IPR016009">
    <property type="entry name" value="tRNA_MeTrfase_TRMD/TRM10"/>
</dbReference>
<dbReference type="NCBIfam" id="NF000648">
    <property type="entry name" value="PRK00026.1"/>
    <property type="match status" value="1"/>
</dbReference>
<dbReference type="NCBIfam" id="TIGR00088">
    <property type="entry name" value="trmD"/>
    <property type="match status" value="1"/>
</dbReference>
<dbReference type="PANTHER" id="PTHR46417">
    <property type="entry name" value="TRNA (GUANINE-N(1)-)-METHYLTRANSFERASE"/>
    <property type="match status" value="1"/>
</dbReference>
<dbReference type="PANTHER" id="PTHR46417:SF1">
    <property type="entry name" value="TRNA (GUANINE-N(1)-)-METHYLTRANSFERASE"/>
    <property type="match status" value="1"/>
</dbReference>
<dbReference type="Pfam" id="PF01746">
    <property type="entry name" value="tRNA_m1G_MT"/>
    <property type="match status" value="1"/>
</dbReference>
<dbReference type="SUPFAM" id="SSF75217">
    <property type="entry name" value="alpha/beta knot"/>
    <property type="match status" value="1"/>
</dbReference>
<dbReference type="SUPFAM" id="SSF54593">
    <property type="entry name" value="Glyoxalase/Bleomycin resistance protein/Dihydroxybiphenyl dioxygenase"/>
    <property type="match status" value="1"/>
</dbReference>
<keyword id="KW-0963">Cytoplasm</keyword>
<keyword id="KW-0489">Methyltransferase</keyword>
<keyword id="KW-0949">S-adenosyl-L-methionine</keyword>
<keyword id="KW-0808">Transferase</keyword>
<keyword id="KW-0819">tRNA processing</keyword>
<proteinExistence type="inferred from homology"/>
<protein>
    <recommendedName>
        <fullName evidence="1">tRNA (guanine-N(1)-)-methyltransferase</fullName>
        <ecNumber evidence="1">2.1.1.228</ecNumber>
    </recommendedName>
    <alternativeName>
        <fullName evidence="1">M1G-methyltransferase</fullName>
    </alternativeName>
    <alternativeName>
        <fullName evidence="1">tRNA [GM37] methyltransferase</fullName>
    </alternativeName>
</protein>
<evidence type="ECO:0000255" key="1">
    <source>
        <dbReference type="HAMAP-Rule" id="MF_00605"/>
    </source>
</evidence>
<sequence>MEIDILSLFPDYFASPLQATILGRAIKQGALSVRSRDIREFGLGKWKQVDDSPYNGEGMLLMAEPVVQAIRSIRRKKSKVIYLSPQGQLLSAKKSRELASCSHLVLLCGHYEGIDERALTAEVDEEISIGDYVLTNGCAAALVLVDALARFIPGILGNQESAEYDSLENGLLEGPQYTRPRVFEGESVPEVLLCGDHQKIADWRKQVSLERTRERRPDLYLQYFYGNSACLSTQEDLPRIEVVSPKTFSVVLEVQDLRKAKKFYSRMFGKECWDGDKLFLLGKTSLYLQQTKETRGPTTVFIELETDHDFVRFLKRWEMLGGELGEQGTGGFPLRQVFDLDGHIWVVSCVQK</sequence>
<organism>
    <name type="scientific">Chlamydia trachomatis serovar L2 (strain ATCC VR-902B / DSM 19102 / 434/Bu)</name>
    <dbReference type="NCBI Taxonomy" id="471472"/>
    <lineage>
        <taxon>Bacteria</taxon>
        <taxon>Pseudomonadati</taxon>
        <taxon>Chlamydiota</taxon>
        <taxon>Chlamydiia</taxon>
        <taxon>Chlamydiales</taxon>
        <taxon>Chlamydiaceae</taxon>
        <taxon>Chlamydia/Chlamydophila group</taxon>
        <taxon>Chlamydia</taxon>
    </lineage>
</organism>
<accession>B0B9D4</accession>
<feature type="chain" id="PRO_1000130147" description="tRNA (guanine-N(1)-)-methyltransferase">
    <location>
        <begin position="1"/>
        <end position="352"/>
    </location>
</feature>
<feature type="binding site" evidence="1">
    <location>
        <position position="109"/>
    </location>
    <ligand>
        <name>S-adenosyl-L-methionine</name>
        <dbReference type="ChEBI" id="CHEBI:59789"/>
    </ligand>
</feature>
<feature type="binding site" evidence="1">
    <location>
        <begin position="129"/>
        <end position="134"/>
    </location>
    <ligand>
        <name>S-adenosyl-L-methionine</name>
        <dbReference type="ChEBI" id="CHEBI:59789"/>
    </ligand>
</feature>
<gene>
    <name evidence="1" type="primary">trmD</name>
    <name type="ordered locus">CTL0282</name>
</gene>
<name>TRMD_CHLT2</name>
<comment type="function">
    <text evidence="1">Specifically methylates guanosine-37 in various tRNAs.</text>
</comment>
<comment type="catalytic activity">
    <reaction evidence="1">
        <text>guanosine(37) in tRNA + S-adenosyl-L-methionine = N(1)-methylguanosine(37) in tRNA + S-adenosyl-L-homocysteine + H(+)</text>
        <dbReference type="Rhea" id="RHEA:36899"/>
        <dbReference type="Rhea" id="RHEA-COMP:10145"/>
        <dbReference type="Rhea" id="RHEA-COMP:10147"/>
        <dbReference type="ChEBI" id="CHEBI:15378"/>
        <dbReference type="ChEBI" id="CHEBI:57856"/>
        <dbReference type="ChEBI" id="CHEBI:59789"/>
        <dbReference type="ChEBI" id="CHEBI:73542"/>
        <dbReference type="ChEBI" id="CHEBI:74269"/>
        <dbReference type="EC" id="2.1.1.228"/>
    </reaction>
</comment>
<comment type="subunit">
    <text evidence="1">Homodimer.</text>
</comment>
<comment type="subcellular location">
    <subcellularLocation>
        <location evidence="1">Cytoplasm</location>
    </subcellularLocation>
</comment>
<comment type="similarity">
    <text evidence="1">Belongs to the RNA methyltransferase TrmD family.</text>
</comment>
<reference key="1">
    <citation type="journal article" date="2008" name="Genome Res.">
        <title>Chlamydia trachomatis: genome sequence analysis of lymphogranuloma venereum isolates.</title>
        <authorList>
            <person name="Thomson N.R."/>
            <person name="Holden M.T.G."/>
            <person name="Carder C."/>
            <person name="Lennard N."/>
            <person name="Lockey S.J."/>
            <person name="Marsh P."/>
            <person name="Skipp P."/>
            <person name="O'Connor C.D."/>
            <person name="Goodhead I."/>
            <person name="Norbertzcak H."/>
            <person name="Harris B."/>
            <person name="Ormond D."/>
            <person name="Rance R."/>
            <person name="Quail M.A."/>
            <person name="Parkhill J."/>
            <person name="Stephens R.S."/>
            <person name="Clarke I.N."/>
        </authorList>
    </citation>
    <scope>NUCLEOTIDE SEQUENCE [LARGE SCALE GENOMIC DNA]</scope>
    <source>
        <strain>ATCC VR-902B / DSM 19102 / 434/Bu</strain>
    </source>
</reference>